<accession>Q9K902</accession>
<sequence>MNKGTVAELRLEHNTVVATLEEEVKREQAKQLQATERMLVDSDDHAFVYVLEDEETFFYLRFPEATWTVLKEGMNSGKEVVAHLNQETLITCHNFYNELRYLIDNIAGNGNYGEEMERAVQNAFGE</sequence>
<organism>
    <name type="scientific">Halalkalibacterium halodurans (strain ATCC BAA-125 / DSM 18197 / FERM 7344 / JCM 9153 / C-125)</name>
    <name type="common">Bacillus halodurans</name>
    <dbReference type="NCBI Taxonomy" id="272558"/>
    <lineage>
        <taxon>Bacteria</taxon>
        <taxon>Bacillati</taxon>
        <taxon>Bacillota</taxon>
        <taxon>Bacilli</taxon>
        <taxon>Bacillales</taxon>
        <taxon>Bacillaceae</taxon>
        <taxon>Halalkalibacterium (ex Joshi et al. 2022)</taxon>
    </lineage>
</organism>
<comment type="similarity">
    <text evidence="1">Belongs to the UPF0738 family.</text>
</comment>
<gene>
    <name type="ordered locus">BH2850</name>
</gene>
<reference key="1">
    <citation type="journal article" date="2000" name="Nucleic Acids Res.">
        <title>Complete genome sequence of the alkaliphilic bacterium Bacillus halodurans and genomic sequence comparison with Bacillus subtilis.</title>
        <authorList>
            <person name="Takami H."/>
            <person name="Nakasone K."/>
            <person name="Takaki Y."/>
            <person name="Maeno G."/>
            <person name="Sasaki R."/>
            <person name="Masui N."/>
            <person name="Fuji F."/>
            <person name="Hirama C."/>
            <person name="Nakamura Y."/>
            <person name="Ogasawara N."/>
            <person name="Kuhara S."/>
            <person name="Horikoshi K."/>
        </authorList>
    </citation>
    <scope>NUCLEOTIDE SEQUENCE [LARGE SCALE GENOMIC DNA]</scope>
    <source>
        <strain>ATCC BAA-125 / DSM 18197 / FERM 7344 / JCM 9153 / C-125</strain>
    </source>
</reference>
<protein>
    <recommendedName>
        <fullName evidence="1">UPF0738 protein BH2850</fullName>
    </recommendedName>
</protein>
<evidence type="ECO:0000255" key="1">
    <source>
        <dbReference type="HAMAP-Rule" id="MF_01861"/>
    </source>
</evidence>
<dbReference type="EMBL" id="BA000004">
    <property type="protein sequence ID" value="BAB06569.1"/>
    <property type="molecule type" value="Genomic_DNA"/>
</dbReference>
<dbReference type="PIR" id="B84006">
    <property type="entry name" value="B84006"/>
</dbReference>
<dbReference type="RefSeq" id="WP_010898997.1">
    <property type="nucleotide sequence ID" value="NC_002570.2"/>
</dbReference>
<dbReference type="STRING" id="272558.gene:10728760"/>
<dbReference type="GeneID" id="87598377"/>
<dbReference type="KEGG" id="bha:BH2850"/>
<dbReference type="eggNOG" id="ENOG5032YMN">
    <property type="taxonomic scope" value="Bacteria"/>
</dbReference>
<dbReference type="HOGENOM" id="CLU_142282_0_0_9"/>
<dbReference type="OrthoDB" id="2966478at2"/>
<dbReference type="Proteomes" id="UP000001258">
    <property type="component" value="Chromosome"/>
</dbReference>
<dbReference type="HAMAP" id="MF_01861">
    <property type="entry name" value="UPF0738"/>
    <property type="match status" value="1"/>
</dbReference>
<dbReference type="InterPro" id="IPR020908">
    <property type="entry name" value="UPF0738"/>
</dbReference>
<dbReference type="Pfam" id="PF19785">
    <property type="entry name" value="UPF0738"/>
    <property type="match status" value="1"/>
</dbReference>
<keyword id="KW-1185">Reference proteome</keyword>
<feature type="chain" id="PRO_0000369647" description="UPF0738 protein BH2850">
    <location>
        <begin position="1"/>
        <end position="126"/>
    </location>
</feature>
<name>Y2850_HALH5</name>
<proteinExistence type="inferred from homology"/>